<accession>P0A335</accession>
<accession>Q97NV4</accession>
<evidence type="ECO:0000255" key="1">
    <source>
        <dbReference type="HAMAP-Rule" id="MF_00600"/>
    </source>
</evidence>
<comment type="function">
    <text evidence="1">Together with its co-chaperonin GroES, plays an essential role in assisting protein folding. The GroEL-GroES system forms a nano-cage that allows encapsulation of the non-native substrate proteins and provides a physical environment optimized to promote and accelerate protein folding.</text>
</comment>
<comment type="catalytic activity">
    <reaction evidence="1">
        <text>ATP + H2O + a folded polypeptide = ADP + phosphate + an unfolded polypeptide.</text>
        <dbReference type="EC" id="5.6.1.7"/>
    </reaction>
</comment>
<comment type="subunit">
    <text evidence="1">Forms a cylinder of 14 subunits composed of two heptameric rings stacked back-to-back. Interacts with the co-chaperonin GroES.</text>
</comment>
<comment type="interaction">
    <interactant intactId="EBI-2207395">
        <id>P0A335</id>
    </interactant>
    <interactant intactId="EBI-2207316">
        <id>P63544</id>
        <label>apt</label>
    </interactant>
    <organismsDiffer>false</organismsDiffer>
    <experiments>2</experiments>
</comment>
<comment type="interaction">
    <interactant intactId="EBI-2207395">
        <id>P0A335</id>
    </interactant>
    <interactant intactId="EBI-2206949">
        <id>Q97NV3</id>
        <label>groES</label>
    </interactant>
    <organismsDiffer>false</organismsDiffer>
    <experiments>2</experiments>
</comment>
<comment type="subcellular location">
    <subcellularLocation>
        <location evidence="1">Cytoplasm</location>
    </subcellularLocation>
</comment>
<comment type="similarity">
    <text evidence="1">Belongs to the chaperonin (HSP60) family.</text>
</comment>
<keyword id="KW-0067">ATP-binding</keyword>
<keyword id="KW-0143">Chaperone</keyword>
<keyword id="KW-0963">Cytoplasm</keyword>
<keyword id="KW-0413">Isomerase</keyword>
<keyword id="KW-0547">Nucleotide-binding</keyword>
<keyword id="KW-1185">Reference proteome</keyword>
<proteinExistence type="evidence at protein level"/>
<gene>
    <name evidence="1" type="primary">groEL</name>
    <name evidence="1" type="synonym">groL</name>
    <name type="ordered locus">SP_1906</name>
</gene>
<reference key="1">
    <citation type="submission" date="2000-12" db="EMBL/GenBank/DDBJ databases">
        <title>Molecular chaperones/chaperonin-encoding stress genes groEL and groES and their use as antimicrobial targets.</title>
        <authorList>
            <person name="Dugourd D.F."/>
            <person name="Young A."/>
            <person name="Wright J.A."/>
        </authorList>
    </citation>
    <scope>NUCLEOTIDE SEQUENCE [GENOMIC DNA]</scope>
    <source>
        <strain>ESP174</strain>
    </source>
</reference>
<reference key="2">
    <citation type="journal article" date="2001" name="Science">
        <title>Complete genome sequence of a virulent isolate of Streptococcus pneumoniae.</title>
        <authorList>
            <person name="Tettelin H."/>
            <person name="Nelson K.E."/>
            <person name="Paulsen I.T."/>
            <person name="Eisen J.A."/>
            <person name="Read T.D."/>
            <person name="Peterson S.N."/>
            <person name="Heidelberg J.F."/>
            <person name="DeBoy R.T."/>
            <person name="Haft D.H."/>
            <person name="Dodson R.J."/>
            <person name="Durkin A.S."/>
            <person name="Gwinn M.L."/>
            <person name="Kolonay J.F."/>
            <person name="Nelson W.C."/>
            <person name="Peterson J.D."/>
            <person name="Umayam L.A."/>
            <person name="White O."/>
            <person name="Salzberg S.L."/>
            <person name="Lewis M.R."/>
            <person name="Radune D."/>
            <person name="Holtzapple E.K."/>
            <person name="Khouri H.M."/>
            <person name="Wolf A.M."/>
            <person name="Utterback T.R."/>
            <person name="Hansen C.L."/>
            <person name="McDonald L.A."/>
            <person name="Feldblyum T.V."/>
            <person name="Angiuoli S.V."/>
            <person name="Dickinson T."/>
            <person name="Hickey E.K."/>
            <person name="Holt I.E."/>
            <person name="Loftus B.J."/>
            <person name="Yang F."/>
            <person name="Smith H.O."/>
            <person name="Venter J.C."/>
            <person name="Dougherty B.A."/>
            <person name="Morrison D.A."/>
            <person name="Hollingshead S.K."/>
            <person name="Fraser C.M."/>
        </authorList>
    </citation>
    <scope>NUCLEOTIDE SEQUENCE [LARGE SCALE GENOMIC DNA]</scope>
    <source>
        <strain>ATCC BAA-334 / TIGR4</strain>
    </source>
</reference>
<feature type="chain" id="PRO_0000063556" description="Chaperonin GroEL">
    <location>
        <begin position="1"/>
        <end position="540"/>
    </location>
</feature>
<feature type="binding site" evidence="1">
    <location>
        <begin position="29"/>
        <end position="32"/>
    </location>
    <ligand>
        <name>ATP</name>
        <dbReference type="ChEBI" id="CHEBI:30616"/>
    </ligand>
</feature>
<feature type="binding site" evidence="1">
    <location>
        <begin position="86"/>
        <end position="90"/>
    </location>
    <ligand>
        <name>ATP</name>
        <dbReference type="ChEBI" id="CHEBI:30616"/>
    </ligand>
</feature>
<feature type="binding site" evidence="1">
    <location>
        <position position="413"/>
    </location>
    <ligand>
        <name>ATP</name>
        <dbReference type="ChEBI" id="CHEBI:30616"/>
    </ligand>
</feature>
<feature type="binding site" evidence="1">
    <location>
        <begin position="476"/>
        <end position="478"/>
    </location>
    <ligand>
        <name>ATP</name>
        <dbReference type="ChEBI" id="CHEBI:30616"/>
    </ligand>
</feature>
<feature type="binding site" evidence="1">
    <location>
        <position position="492"/>
    </location>
    <ligand>
        <name>ATP</name>
        <dbReference type="ChEBI" id="CHEBI:30616"/>
    </ligand>
</feature>
<protein>
    <recommendedName>
        <fullName evidence="1">Chaperonin GroEL</fullName>
        <ecNumber evidence="1">5.6.1.7</ecNumber>
    </recommendedName>
    <alternativeName>
        <fullName evidence="1">60 kDa chaperonin</fullName>
    </alternativeName>
    <alternativeName>
        <fullName evidence="1">Chaperonin-60</fullName>
        <shortName evidence="1">Cpn60</shortName>
    </alternativeName>
</protein>
<dbReference type="EC" id="5.6.1.7" evidence="1"/>
<dbReference type="EMBL" id="AF325449">
    <property type="protein sequence ID" value="AAL55997.1"/>
    <property type="molecule type" value="mRNA"/>
</dbReference>
<dbReference type="EMBL" id="AE005672">
    <property type="protein sequence ID" value="AAK75976.1"/>
    <property type="molecule type" value="Genomic_DNA"/>
</dbReference>
<dbReference type="PIR" id="G95222">
    <property type="entry name" value="G95222"/>
</dbReference>
<dbReference type="RefSeq" id="WP_000031573.1">
    <property type="nucleotide sequence ID" value="NZ_CP155539.1"/>
</dbReference>
<dbReference type="SMR" id="P0A335"/>
<dbReference type="IntAct" id="P0A335">
    <property type="interactions" value="2"/>
</dbReference>
<dbReference type="PaxDb" id="170187-SP_1906"/>
<dbReference type="EnsemblBacteria" id="AAK75976">
    <property type="protein sequence ID" value="AAK75976"/>
    <property type="gene ID" value="SP_1906"/>
</dbReference>
<dbReference type="GeneID" id="45652869"/>
<dbReference type="KEGG" id="spn:SP_1906"/>
<dbReference type="eggNOG" id="COG0459">
    <property type="taxonomic scope" value="Bacteria"/>
</dbReference>
<dbReference type="PhylomeDB" id="P0A335"/>
<dbReference type="BioCyc" id="SPNE170187:G1FZB-1959-MONOMER"/>
<dbReference type="Proteomes" id="UP000000585">
    <property type="component" value="Chromosome"/>
</dbReference>
<dbReference type="GO" id="GO:0005737">
    <property type="term" value="C:cytoplasm"/>
    <property type="evidence" value="ECO:0007669"/>
    <property type="project" value="UniProtKB-SubCell"/>
</dbReference>
<dbReference type="GO" id="GO:0005524">
    <property type="term" value="F:ATP binding"/>
    <property type="evidence" value="ECO:0007669"/>
    <property type="project" value="UniProtKB-UniRule"/>
</dbReference>
<dbReference type="GO" id="GO:0140662">
    <property type="term" value="F:ATP-dependent protein folding chaperone"/>
    <property type="evidence" value="ECO:0007669"/>
    <property type="project" value="InterPro"/>
</dbReference>
<dbReference type="GO" id="GO:0016853">
    <property type="term" value="F:isomerase activity"/>
    <property type="evidence" value="ECO:0007669"/>
    <property type="project" value="UniProtKB-KW"/>
</dbReference>
<dbReference type="GO" id="GO:0051082">
    <property type="term" value="F:unfolded protein binding"/>
    <property type="evidence" value="ECO:0007669"/>
    <property type="project" value="UniProtKB-UniRule"/>
</dbReference>
<dbReference type="GO" id="GO:0042026">
    <property type="term" value="P:protein refolding"/>
    <property type="evidence" value="ECO:0007669"/>
    <property type="project" value="UniProtKB-UniRule"/>
</dbReference>
<dbReference type="CDD" id="cd03344">
    <property type="entry name" value="GroEL"/>
    <property type="match status" value="1"/>
</dbReference>
<dbReference type="FunFam" id="1.10.560.10:FF:000001">
    <property type="entry name" value="60 kDa chaperonin"/>
    <property type="match status" value="1"/>
</dbReference>
<dbReference type="FunFam" id="3.50.7.10:FF:000001">
    <property type="entry name" value="60 kDa chaperonin"/>
    <property type="match status" value="1"/>
</dbReference>
<dbReference type="Gene3D" id="3.50.7.10">
    <property type="entry name" value="GroEL"/>
    <property type="match status" value="1"/>
</dbReference>
<dbReference type="Gene3D" id="1.10.560.10">
    <property type="entry name" value="GroEL-like equatorial domain"/>
    <property type="match status" value="1"/>
</dbReference>
<dbReference type="Gene3D" id="3.30.260.10">
    <property type="entry name" value="TCP-1-like chaperonin intermediate domain"/>
    <property type="match status" value="1"/>
</dbReference>
<dbReference type="HAMAP" id="MF_00600">
    <property type="entry name" value="CH60"/>
    <property type="match status" value="1"/>
</dbReference>
<dbReference type="InterPro" id="IPR018370">
    <property type="entry name" value="Chaperonin_Cpn60_CS"/>
</dbReference>
<dbReference type="InterPro" id="IPR001844">
    <property type="entry name" value="Cpn60/GroEL"/>
</dbReference>
<dbReference type="InterPro" id="IPR002423">
    <property type="entry name" value="Cpn60/GroEL/TCP-1"/>
</dbReference>
<dbReference type="InterPro" id="IPR027409">
    <property type="entry name" value="GroEL-like_apical_dom_sf"/>
</dbReference>
<dbReference type="InterPro" id="IPR027413">
    <property type="entry name" value="GROEL-like_equatorial_sf"/>
</dbReference>
<dbReference type="InterPro" id="IPR027410">
    <property type="entry name" value="TCP-1-like_intermed_sf"/>
</dbReference>
<dbReference type="NCBIfam" id="TIGR02348">
    <property type="entry name" value="GroEL"/>
    <property type="match status" value="1"/>
</dbReference>
<dbReference type="NCBIfam" id="NF000592">
    <property type="entry name" value="PRK00013.1"/>
    <property type="match status" value="1"/>
</dbReference>
<dbReference type="NCBIfam" id="NF009487">
    <property type="entry name" value="PRK12849.1"/>
    <property type="match status" value="1"/>
</dbReference>
<dbReference type="NCBIfam" id="NF009488">
    <property type="entry name" value="PRK12850.1"/>
    <property type="match status" value="1"/>
</dbReference>
<dbReference type="NCBIfam" id="NF009489">
    <property type="entry name" value="PRK12851.1"/>
    <property type="match status" value="1"/>
</dbReference>
<dbReference type="PANTHER" id="PTHR45633">
    <property type="entry name" value="60 KDA HEAT SHOCK PROTEIN, MITOCHONDRIAL"/>
    <property type="match status" value="1"/>
</dbReference>
<dbReference type="Pfam" id="PF00118">
    <property type="entry name" value="Cpn60_TCP1"/>
    <property type="match status" value="1"/>
</dbReference>
<dbReference type="PRINTS" id="PR00298">
    <property type="entry name" value="CHAPERONIN60"/>
</dbReference>
<dbReference type="SUPFAM" id="SSF52029">
    <property type="entry name" value="GroEL apical domain-like"/>
    <property type="match status" value="1"/>
</dbReference>
<dbReference type="SUPFAM" id="SSF48592">
    <property type="entry name" value="GroEL equatorial domain-like"/>
    <property type="match status" value="1"/>
</dbReference>
<dbReference type="SUPFAM" id="SSF54849">
    <property type="entry name" value="GroEL-intermediate domain like"/>
    <property type="match status" value="1"/>
</dbReference>
<dbReference type="PROSITE" id="PS00296">
    <property type="entry name" value="CHAPERONINS_CPN60"/>
    <property type="match status" value="1"/>
</dbReference>
<name>CH60_STRPN</name>
<organism>
    <name type="scientific">Streptococcus pneumoniae serotype 4 (strain ATCC BAA-334 / TIGR4)</name>
    <dbReference type="NCBI Taxonomy" id="170187"/>
    <lineage>
        <taxon>Bacteria</taxon>
        <taxon>Bacillati</taxon>
        <taxon>Bacillota</taxon>
        <taxon>Bacilli</taxon>
        <taxon>Lactobacillales</taxon>
        <taxon>Streptococcaceae</taxon>
        <taxon>Streptococcus</taxon>
    </lineage>
</organism>
<sequence length="540" mass="57095">MSKEIKFSSDARSAMVRGVDILADTVKVTLGPKGRNVVLEKSFGSPLITNDGVTIAKEIELEDHFENMGAKLVSEVASKTNDIAGDGTTTATVLTQAIVREGIKNVTAGANPIGIRRGIETAVAAAVEALKNNAIPVANKEAIAQVAAVSSRSEKVGEYISEAMEKVGKDGVITIEESRGMETELEVVEGMQFDRGYLSQYMVTDSEKMVADLENPYILITDKKISNIQEILPLLESILQSNRPLLIIADDVDGEALPTLVLNKIRGTFNVVAVKAPGFGDRRKAMLEDIAILTGGTVITEDLGLELKDATIEALGQAARVTVDKDSTVIVEGAGNPEAISHRVAVIKSQIETTTSEFDREKLQERLAKLSGGVAVIKVGAATETELKEMKLRIEDALNATRAAVEEGIVAGGGTALANVIPAVATLELTGDEATGRNIVLRALEEPVRQIAHNAGFEGSIVIDRLKNAELGIGFNAATGEWVNMIDQGIIDPVKVSRSALQNAASVASLILTTEAVVANKPEPVAPAPAMDPSMMGGMM</sequence>